<comment type="function">
    <text evidence="1">One of the primary rRNA binding proteins, it binds directly to 16S rRNA where it nucleates assembly of the head domain of the 30S subunit. Is located at the subunit interface close to the decoding center, probably blocks exit of the E-site tRNA.</text>
</comment>
<comment type="subunit">
    <text evidence="1">Part of the 30S ribosomal subunit. Contacts proteins S9 and S11.</text>
</comment>
<comment type="similarity">
    <text evidence="1">Belongs to the universal ribosomal protein uS7 family.</text>
</comment>
<proteinExistence type="inferred from homology"/>
<sequence length="156" mass="17864">MSRRGVIQRRPVPPDSVYNSRLVSMIIRRIMRHGKKSLAARIVYDALKTIEERTGNNALEVFERAVRNATPLVEVKARRVGGATYQVPMEVRTERGTTLALRWLVQFSRSRPGRTMASRLANELLDAANESGNAIRKREETHRMAEANKAFAHYRY</sequence>
<evidence type="ECO:0000255" key="1">
    <source>
        <dbReference type="HAMAP-Rule" id="MF_00480"/>
    </source>
</evidence>
<evidence type="ECO:0000305" key="2"/>
<name>RS7_NOSS1</name>
<dbReference type="EMBL" id="BA000019">
    <property type="protein sequence ID" value="BAB76038.1"/>
    <property type="molecule type" value="Genomic_DNA"/>
</dbReference>
<dbReference type="PIR" id="AD2348">
    <property type="entry name" value="AD2348"/>
</dbReference>
<dbReference type="RefSeq" id="WP_010998477.1">
    <property type="nucleotide sequence ID" value="NZ_RSCN01000027.1"/>
</dbReference>
<dbReference type="SMR" id="Q8YP61"/>
<dbReference type="STRING" id="103690.gene:10496388"/>
<dbReference type="GeneID" id="58723957"/>
<dbReference type="KEGG" id="ana:all4339"/>
<dbReference type="eggNOG" id="COG0049">
    <property type="taxonomic scope" value="Bacteria"/>
</dbReference>
<dbReference type="OrthoDB" id="9807653at2"/>
<dbReference type="Proteomes" id="UP000002483">
    <property type="component" value="Chromosome"/>
</dbReference>
<dbReference type="GO" id="GO:0015935">
    <property type="term" value="C:small ribosomal subunit"/>
    <property type="evidence" value="ECO:0007669"/>
    <property type="project" value="InterPro"/>
</dbReference>
<dbReference type="GO" id="GO:0019843">
    <property type="term" value="F:rRNA binding"/>
    <property type="evidence" value="ECO:0007669"/>
    <property type="project" value="UniProtKB-UniRule"/>
</dbReference>
<dbReference type="GO" id="GO:0003735">
    <property type="term" value="F:structural constituent of ribosome"/>
    <property type="evidence" value="ECO:0007669"/>
    <property type="project" value="InterPro"/>
</dbReference>
<dbReference type="GO" id="GO:0000049">
    <property type="term" value="F:tRNA binding"/>
    <property type="evidence" value="ECO:0007669"/>
    <property type="project" value="UniProtKB-UniRule"/>
</dbReference>
<dbReference type="GO" id="GO:0006412">
    <property type="term" value="P:translation"/>
    <property type="evidence" value="ECO:0007669"/>
    <property type="project" value="UniProtKB-UniRule"/>
</dbReference>
<dbReference type="CDD" id="cd14871">
    <property type="entry name" value="uS7_Chloroplast"/>
    <property type="match status" value="1"/>
</dbReference>
<dbReference type="FunFam" id="1.10.455.10:FF:000001">
    <property type="entry name" value="30S ribosomal protein S7"/>
    <property type="match status" value="1"/>
</dbReference>
<dbReference type="Gene3D" id="1.10.455.10">
    <property type="entry name" value="Ribosomal protein S7 domain"/>
    <property type="match status" value="1"/>
</dbReference>
<dbReference type="HAMAP" id="MF_00480_B">
    <property type="entry name" value="Ribosomal_uS7_B"/>
    <property type="match status" value="1"/>
</dbReference>
<dbReference type="InterPro" id="IPR000235">
    <property type="entry name" value="Ribosomal_uS7"/>
</dbReference>
<dbReference type="InterPro" id="IPR005717">
    <property type="entry name" value="Ribosomal_uS7_bac/org-type"/>
</dbReference>
<dbReference type="InterPro" id="IPR020606">
    <property type="entry name" value="Ribosomal_uS7_CS"/>
</dbReference>
<dbReference type="InterPro" id="IPR023798">
    <property type="entry name" value="Ribosomal_uS7_dom"/>
</dbReference>
<dbReference type="InterPro" id="IPR036823">
    <property type="entry name" value="Ribosomal_uS7_dom_sf"/>
</dbReference>
<dbReference type="NCBIfam" id="TIGR01029">
    <property type="entry name" value="rpsG_bact"/>
    <property type="match status" value="1"/>
</dbReference>
<dbReference type="PANTHER" id="PTHR11205">
    <property type="entry name" value="RIBOSOMAL PROTEIN S7"/>
    <property type="match status" value="1"/>
</dbReference>
<dbReference type="Pfam" id="PF00177">
    <property type="entry name" value="Ribosomal_S7"/>
    <property type="match status" value="1"/>
</dbReference>
<dbReference type="PIRSF" id="PIRSF002122">
    <property type="entry name" value="RPS7p_RPS7a_RPS5e_RPS7o"/>
    <property type="match status" value="1"/>
</dbReference>
<dbReference type="SUPFAM" id="SSF47973">
    <property type="entry name" value="Ribosomal protein S7"/>
    <property type="match status" value="1"/>
</dbReference>
<dbReference type="PROSITE" id="PS00052">
    <property type="entry name" value="RIBOSOMAL_S7"/>
    <property type="match status" value="1"/>
</dbReference>
<organism>
    <name type="scientific">Nostoc sp. (strain PCC 7120 / SAG 25.82 / UTEX 2576)</name>
    <dbReference type="NCBI Taxonomy" id="103690"/>
    <lineage>
        <taxon>Bacteria</taxon>
        <taxon>Bacillati</taxon>
        <taxon>Cyanobacteriota</taxon>
        <taxon>Cyanophyceae</taxon>
        <taxon>Nostocales</taxon>
        <taxon>Nostocaceae</taxon>
        <taxon>Nostoc</taxon>
    </lineage>
</organism>
<accession>Q8YP61</accession>
<protein>
    <recommendedName>
        <fullName evidence="1">Small ribosomal subunit protein uS7</fullName>
    </recommendedName>
    <alternativeName>
        <fullName evidence="2">30S ribosomal protein S7</fullName>
    </alternativeName>
</protein>
<gene>
    <name evidence="1" type="primary">rpsG</name>
    <name evidence="1" type="synonym">rps7</name>
    <name type="ordered locus">all4339</name>
</gene>
<keyword id="KW-1185">Reference proteome</keyword>
<keyword id="KW-0687">Ribonucleoprotein</keyword>
<keyword id="KW-0689">Ribosomal protein</keyword>
<keyword id="KW-0694">RNA-binding</keyword>
<keyword id="KW-0699">rRNA-binding</keyword>
<keyword id="KW-0820">tRNA-binding</keyword>
<feature type="chain" id="PRO_0000124205" description="Small ribosomal subunit protein uS7">
    <location>
        <begin position="1"/>
        <end position="156"/>
    </location>
</feature>
<reference key="1">
    <citation type="journal article" date="2001" name="DNA Res.">
        <title>Complete genomic sequence of the filamentous nitrogen-fixing cyanobacterium Anabaena sp. strain PCC 7120.</title>
        <authorList>
            <person name="Kaneko T."/>
            <person name="Nakamura Y."/>
            <person name="Wolk C.P."/>
            <person name="Kuritz T."/>
            <person name="Sasamoto S."/>
            <person name="Watanabe A."/>
            <person name="Iriguchi M."/>
            <person name="Ishikawa A."/>
            <person name="Kawashima K."/>
            <person name="Kimura T."/>
            <person name="Kishida Y."/>
            <person name="Kohara M."/>
            <person name="Matsumoto M."/>
            <person name="Matsuno A."/>
            <person name="Muraki A."/>
            <person name="Nakazaki N."/>
            <person name="Shimpo S."/>
            <person name="Sugimoto M."/>
            <person name="Takazawa M."/>
            <person name="Yamada M."/>
            <person name="Yasuda M."/>
            <person name="Tabata S."/>
        </authorList>
    </citation>
    <scope>NUCLEOTIDE SEQUENCE [LARGE SCALE GENOMIC DNA]</scope>
    <source>
        <strain>PCC 7120 / SAG 25.82 / UTEX 2576</strain>
    </source>
</reference>